<comment type="catalytic activity">
    <reaction evidence="1">
        <text>(S)-4-amino-5-oxopentanoate = 5-aminolevulinate</text>
        <dbReference type="Rhea" id="RHEA:14265"/>
        <dbReference type="ChEBI" id="CHEBI:57501"/>
        <dbReference type="ChEBI" id="CHEBI:356416"/>
        <dbReference type="EC" id="5.4.3.8"/>
    </reaction>
</comment>
<comment type="cofactor">
    <cofactor evidence="1">
        <name>pyridoxal 5'-phosphate</name>
        <dbReference type="ChEBI" id="CHEBI:597326"/>
    </cofactor>
</comment>
<comment type="pathway">
    <text evidence="1">Porphyrin-containing compound metabolism; protoporphyrin-IX biosynthesis; 5-aminolevulinate from L-glutamyl-tRNA(Glu): step 2/2.</text>
</comment>
<comment type="subunit">
    <text evidence="1">Homodimer.</text>
</comment>
<comment type="subcellular location">
    <subcellularLocation>
        <location evidence="1">Cytoplasm</location>
    </subcellularLocation>
</comment>
<comment type="similarity">
    <text evidence="1">Belongs to the class-III pyridoxal-phosphate-dependent aminotransferase family. HemL subfamily.</text>
</comment>
<proteinExistence type="inferred from homology"/>
<name>GSA1_BACC7</name>
<keyword id="KW-0963">Cytoplasm</keyword>
<keyword id="KW-0413">Isomerase</keyword>
<keyword id="KW-0627">Porphyrin biosynthesis</keyword>
<keyword id="KW-0663">Pyridoxal phosphate</keyword>
<feature type="chain" id="PRO_0000382265" description="Glutamate-1-semialdehyde 2,1-aminomutase 1">
    <location>
        <begin position="1"/>
        <end position="434"/>
    </location>
</feature>
<feature type="modified residue" description="N6-(pyridoxal phosphate)lysine" evidence="1">
    <location>
        <position position="270"/>
    </location>
</feature>
<evidence type="ECO:0000255" key="1">
    <source>
        <dbReference type="HAMAP-Rule" id="MF_00375"/>
    </source>
</evidence>
<reference key="1">
    <citation type="submission" date="2008-10" db="EMBL/GenBank/DDBJ databases">
        <title>Genome sequence of Bacillus cereus AH187.</title>
        <authorList>
            <person name="Dodson R.J."/>
            <person name="Durkin A.S."/>
            <person name="Rosovitz M.J."/>
            <person name="Rasko D.A."/>
            <person name="Kolsto A.B."/>
            <person name="Okstad O.A."/>
            <person name="Ravel J."/>
            <person name="Sutton G."/>
        </authorList>
    </citation>
    <scope>NUCLEOTIDE SEQUENCE [LARGE SCALE GENOMIC DNA]</scope>
    <source>
        <strain>AH187</strain>
    </source>
</reference>
<gene>
    <name evidence="1" type="primary">hemL1</name>
    <name type="ordered locus">BCAH187_A0587</name>
</gene>
<organism>
    <name type="scientific">Bacillus cereus (strain AH187)</name>
    <dbReference type="NCBI Taxonomy" id="405534"/>
    <lineage>
        <taxon>Bacteria</taxon>
        <taxon>Bacillati</taxon>
        <taxon>Bacillota</taxon>
        <taxon>Bacilli</taxon>
        <taxon>Bacillales</taxon>
        <taxon>Bacillaceae</taxon>
        <taxon>Bacillus</taxon>
        <taxon>Bacillus cereus group</taxon>
    </lineage>
</organism>
<protein>
    <recommendedName>
        <fullName evidence="1">Glutamate-1-semialdehyde 2,1-aminomutase 1</fullName>
        <shortName evidence="1">GSA 1</shortName>
        <ecNumber evidence="1">5.4.3.8</ecNumber>
    </recommendedName>
    <alternativeName>
        <fullName evidence="1">Glutamate-1-semialdehyde aminotransferase 1</fullName>
        <shortName evidence="1">GSA-AT 1</shortName>
    </alternativeName>
</protein>
<accession>B7HU66</accession>
<sequence>MVVKFTKSEALHKEALEHIVGGVNSPSRSFKAVGGGAPVAMERGKGAYFWDVDGNKYIDYLAAYGPIITGHAHPHITKAITTAAENGVLYGTPTALEVKFAKMLKEAMPALDKVRFVNSGTEAVMTTIRVARAYTGRTKIMKFAGCYHGHSDLVLVAAGSGPSTLGTPDSAGVPQSIAQEVITVPFNNVETLKEALDKWGHEVAAILVEPIVGNFGIVEPKPGFLEKVNELVHEAGALVIYDEVITAFRFMYGGAQDLLGVTPDLTALGKVIGGGLPIGAYGGKKEIMEQVAPLGPAYQAGTMAGNPASMASGIACLEVLQQEGLYEKLDELGAMLEKGILEQAEKHNIDITLNRLKGALTVYFTTNTIEDYDAAQDTDGEMFGKFFKLMLQEGINLAPSKYEAWFLTTEHTKEDIEYTIEAVGRAFAALANNK</sequence>
<dbReference type="EC" id="5.4.3.8" evidence="1"/>
<dbReference type="EMBL" id="CP001177">
    <property type="protein sequence ID" value="ACJ78777.1"/>
    <property type="molecule type" value="Genomic_DNA"/>
</dbReference>
<dbReference type="SMR" id="B7HU66"/>
<dbReference type="KEGG" id="bcr:BCAH187_A0587"/>
<dbReference type="HOGENOM" id="CLU_016922_1_5_9"/>
<dbReference type="UniPathway" id="UPA00251">
    <property type="reaction ID" value="UER00317"/>
</dbReference>
<dbReference type="Proteomes" id="UP000002214">
    <property type="component" value="Chromosome"/>
</dbReference>
<dbReference type="GO" id="GO:0005737">
    <property type="term" value="C:cytoplasm"/>
    <property type="evidence" value="ECO:0007669"/>
    <property type="project" value="UniProtKB-SubCell"/>
</dbReference>
<dbReference type="GO" id="GO:0042286">
    <property type="term" value="F:glutamate-1-semialdehyde 2,1-aminomutase activity"/>
    <property type="evidence" value="ECO:0007669"/>
    <property type="project" value="UniProtKB-UniRule"/>
</dbReference>
<dbReference type="GO" id="GO:0030170">
    <property type="term" value="F:pyridoxal phosphate binding"/>
    <property type="evidence" value="ECO:0007669"/>
    <property type="project" value="InterPro"/>
</dbReference>
<dbReference type="GO" id="GO:0008483">
    <property type="term" value="F:transaminase activity"/>
    <property type="evidence" value="ECO:0007669"/>
    <property type="project" value="InterPro"/>
</dbReference>
<dbReference type="GO" id="GO:0006782">
    <property type="term" value="P:protoporphyrinogen IX biosynthetic process"/>
    <property type="evidence" value="ECO:0007669"/>
    <property type="project" value="UniProtKB-UniRule"/>
</dbReference>
<dbReference type="CDD" id="cd00610">
    <property type="entry name" value="OAT_like"/>
    <property type="match status" value="1"/>
</dbReference>
<dbReference type="FunFam" id="3.40.640.10:FF:000021">
    <property type="entry name" value="Glutamate-1-semialdehyde 2,1-aminomutase"/>
    <property type="match status" value="1"/>
</dbReference>
<dbReference type="Gene3D" id="3.90.1150.10">
    <property type="entry name" value="Aspartate Aminotransferase, domain 1"/>
    <property type="match status" value="1"/>
</dbReference>
<dbReference type="Gene3D" id="3.40.640.10">
    <property type="entry name" value="Type I PLP-dependent aspartate aminotransferase-like (Major domain)"/>
    <property type="match status" value="1"/>
</dbReference>
<dbReference type="HAMAP" id="MF_00375">
    <property type="entry name" value="HemL_aminotrans_3"/>
    <property type="match status" value="1"/>
</dbReference>
<dbReference type="InterPro" id="IPR004639">
    <property type="entry name" value="4pyrrol_synth_GluAld_NH2Trfase"/>
</dbReference>
<dbReference type="InterPro" id="IPR005814">
    <property type="entry name" value="Aminotrans_3"/>
</dbReference>
<dbReference type="InterPro" id="IPR049704">
    <property type="entry name" value="Aminotrans_3_PPA_site"/>
</dbReference>
<dbReference type="InterPro" id="IPR015424">
    <property type="entry name" value="PyrdxlP-dep_Trfase"/>
</dbReference>
<dbReference type="InterPro" id="IPR015421">
    <property type="entry name" value="PyrdxlP-dep_Trfase_major"/>
</dbReference>
<dbReference type="InterPro" id="IPR015422">
    <property type="entry name" value="PyrdxlP-dep_Trfase_small"/>
</dbReference>
<dbReference type="NCBIfam" id="TIGR00713">
    <property type="entry name" value="hemL"/>
    <property type="match status" value="1"/>
</dbReference>
<dbReference type="NCBIfam" id="NF000818">
    <property type="entry name" value="PRK00062.1"/>
    <property type="match status" value="1"/>
</dbReference>
<dbReference type="NCBIfam" id="NF009055">
    <property type="entry name" value="PRK12389.1"/>
    <property type="match status" value="1"/>
</dbReference>
<dbReference type="PANTHER" id="PTHR43713">
    <property type="entry name" value="GLUTAMATE-1-SEMIALDEHYDE 2,1-AMINOMUTASE"/>
    <property type="match status" value="1"/>
</dbReference>
<dbReference type="PANTHER" id="PTHR43713:SF1">
    <property type="entry name" value="GLUTAMATE-1-SEMIALDEHYDE 2,1-AMINOMUTASE 2"/>
    <property type="match status" value="1"/>
</dbReference>
<dbReference type="Pfam" id="PF00202">
    <property type="entry name" value="Aminotran_3"/>
    <property type="match status" value="1"/>
</dbReference>
<dbReference type="SUPFAM" id="SSF53383">
    <property type="entry name" value="PLP-dependent transferases"/>
    <property type="match status" value="1"/>
</dbReference>
<dbReference type="PROSITE" id="PS00600">
    <property type="entry name" value="AA_TRANSFER_CLASS_3"/>
    <property type="match status" value="1"/>
</dbReference>